<accession>Q23400</accession>
<sequence>MSSETLEFSGCNFFRIRLAYSILSGRPIRIINIRKNDDRPGIRDFESKLIGLLEKVTNGTKVEISRTGTQVIFRPGMITGGVVNLDCGTERCISYFLEPLLLLSPFCKVPMVIKLKGVTNAPGEISVDGMKASWLKVYNKFVLNDEKLDIKIQARGLKPEGGGVVVFTAPIVKTLRPVKRQQVGKVCKIRGQAYVTKVTPSLAYRMIDAAKKAMHGYISDVYITVDQRKGDAGGASPGYGLFLTAETTEGVIYQAEAISRPKGESGVPILPEDIGIEAGHALLQQIYMGGALDSSAQILASTFMTLCPKDVSHFLYGPLPMYSVHALRHLKQFFEIEFKMEDFKKTLKEEEADLKTGSADKAMVTAVGVGYSNLNKTIL</sequence>
<dbReference type="EMBL" id="FO081697">
    <property type="protein sequence ID" value="CCD73717.1"/>
    <property type="molecule type" value="Genomic_DNA"/>
</dbReference>
<dbReference type="PIR" id="G88196">
    <property type="entry name" value="G88196"/>
</dbReference>
<dbReference type="RefSeq" id="NP_495445.2">
    <property type="nucleotide sequence ID" value="NM_063044.5"/>
</dbReference>
<dbReference type="SMR" id="Q23400"/>
<dbReference type="BioGRID" id="39488">
    <property type="interactions" value="1"/>
</dbReference>
<dbReference type="FunCoup" id="Q23400">
    <property type="interactions" value="2259"/>
</dbReference>
<dbReference type="STRING" id="6239.ZK1127.5.1"/>
<dbReference type="PaxDb" id="6239-ZK1127.5"/>
<dbReference type="PeptideAtlas" id="Q23400"/>
<dbReference type="EnsemblMetazoa" id="ZK1127.5.1">
    <property type="protein sequence ID" value="ZK1127.5.1"/>
    <property type="gene ID" value="WBGene00022852"/>
</dbReference>
<dbReference type="GeneID" id="174151"/>
<dbReference type="KEGG" id="cel:CELE_ZK1127.5"/>
<dbReference type="UCSC" id="ZK1127.5">
    <property type="organism name" value="c. elegans"/>
</dbReference>
<dbReference type="AGR" id="WB:WBGene00022852"/>
<dbReference type="CTD" id="174151"/>
<dbReference type="WormBase" id="ZK1127.5">
    <property type="protein sequence ID" value="CE32083"/>
    <property type="gene ID" value="WBGene00022852"/>
</dbReference>
<dbReference type="eggNOG" id="KOG3980">
    <property type="taxonomic scope" value="Eukaryota"/>
</dbReference>
<dbReference type="GeneTree" id="ENSGT00530000063404"/>
<dbReference type="HOGENOM" id="CLU_027882_1_0_1"/>
<dbReference type="InParanoid" id="Q23400"/>
<dbReference type="OMA" id="YTDQNKG"/>
<dbReference type="OrthoDB" id="1911237at2759"/>
<dbReference type="PhylomeDB" id="Q23400"/>
<dbReference type="Reactome" id="R-CEL-6791226">
    <property type="pathway name" value="Major pathway of rRNA processing in the nucleolus and cytosol"/>
</dbReference>
<dbReference type="PRO" id="PR:Q23400"/>
<dbReference type="Proteomes" id="UP000001940">
    <property type="component" value="Chromosome II"/>
</dbReference>
<dbReference type="Bgee" id="WBGene00022852">
    <property type="expression patterns" value="Expressed in germ line (C elegans) and 4 other cell types or tissues"/>
</dbReference>
<dbReference type="GO" id="GO:0005730">
    <property type="term" value="C:nucleolus"/>
    <property type="evidence" value="ECO:0007669"/>
    <property type="project" value="UniProtKB-SubCell"/>
</dbReference>
<dbReference type="GO" id="GO:0032040">
    <property type="term" value="C:small-subunit processome"/>
    <property type="evidence" value="ECO:0000250"/>
    <property type="project" value="UniProtKB"/>
</dbReference>
<dbReference type="GO" id="GO:0004521">
    <property type="term" value="F:RNA endonuclease activity"/>
    <property type="evidence" value="ECO:0000318"/>
    <property type="project" value="GO_Central"/>
</dbReference>
<dbReference type="GO" id="GO:0000479">
    <property type="term" value="P:endonucleolytic cleavage of tricistronic rRNA transcript (SSU-rRNA, 5.8S rRNA, LSU-rRNA)"/>
    <property type="evidence" value="ECO:0000318"/>
    <property type="project" value="GO_Central"/>
</dbReference>
<dbReference type="GO" id="GO:0042274">
    <property type="term" value="P:ribosomal small subunit biogenesis"/>
    <property type="evidence" value="ECO:0000250"/>
    <property type="project" value="UniProtKB"/>
</dbReference>
<dbReference type="CDD" id="cd00875">
    <property type="entry name" value="RNA_Cyclase_Class_I"/>
    <property type="match status" value="1"/>
</dbReference>
<dbReference type="FunFam" id="3.30.360.20:FF:000004">
    <property type="entry name" value="18S rRNA biogenesis protein"/>
    <property type="match status" value="1"/>
</dbReference>
<dbReference type="Gene3D" id="3.65.10.20">
    <property type="entry name" value="RNA 3'-terminal phosphate cyclase domain"/>
    <property type="match status" value="1"/>
</dbReference>
<dbReference type="Gene3D" id="3.30.360.20">
    <property type="entry name" value="RNA 3'-terminal phosphate cyclase, insert domain"/>
    <property type="match status" value="1"/>
</dbReference>
<dbReference type="InterPro" id="IPR013791">
    <property type="entry name" value="RNA3'-term_phos_cycl_insert"/>
</dbReference>
<dbReference type="InterPro" id="IPR023797">
    <property type="entry name" value="RNA3'_phos_cyclase_dom"/>
</dbReference>
<dbReference type="InterPro" id="IPR037136">
    <property type="entry name" value="RNA3'_phos_cyclase_dom_sf"/>
</dbReference>
<dbReference type="InterPro" id="IPR000228">
    <property type="entry name" value="RNA3'_term_phos_cyc"/>
</dbReference>
<dbReference type="InterPro" id="IPR016443">
    <property type="entry name" value="RNA3'_term_phos_cyc_type_2"/>
</dbReference>
<dbReference type="InterPro" id="IPR020719">
    <property type="entry name" value="RNA3'_term_phos_cycl-like_CS"/>
</dbReference>
<dbReference type="InterPro" id="IPR013792">
    <property type="entry name" value="RNA3'P_cycl/enolpyr_Trfase_a/b"/>
</dbReference>
<dbReference type="InterPro" id="IPR036553">
    <property type="entry name" value="RPTC_insert"/>
</dbReference>
<dbReference type="NCBIfam" id="TIGR03400">
    <property type="entry name" value="18S_RNA_Rcl1p"/>
    <property type="match status" value="1"/>
</dbReference>
<dbReference type="PANTHER" id="PTHR11096">
    <property type="entry name" value="RNA 3' TERMINAL PHOSPHATE CYCLASE"/>
    <property type="match status" value="1"/>
</dbReference>
<dbReference type="PANTHER" id="PTHR11096:SF1">
    <property type="entry name" value="RNA 3'-TERMINAL PHOSPHATE CYCLASE-LIKE PROTEIN"/>
    <property type="match status" value="1"/>
</dbReference>
<dbReference type="Pfam" id="PF01137">
    <property type="entry name" value="RTC"/>
    <property type="match status" value="1"/>
</dbReference>
<dbReference type="Pfam" id="PF05189">
    <property type="entry name" value="RTC_insert"/>
    <property type="match status" value="1"/>
</dbReference>
<dbReference type="PIRSF" id="PIRSF005378">
    <property type="entry name" value="RNA3'_term_phos_cycl_euk"/>
    <property type="match status" value="1"/>
</dbReference>
<dbReference type="SUPFAM" id="SSF55205">
    <property type="entry name" value="EPT/RTPC-like"/>
    <property type="match status" value="1"/>
</dbReference>
<dbReference type="PROSITE" id="PS01287">
    <property type="entry name" value="RTC"/>
    <property type="match status" value="1"/>
</dbReference>
<feature type="chain" id="PRO_0000156441" description="Probable RNA 3'-terminal phosphate cyclase-like protein">
    <location>
        <begin position="1"/>
        <end position="379"/>
    </location>
</feature>
<gene>
    <name type="ORF">ZK1127.5</name>
</gene>
<keyword id="KW-0539">Nucleus</keyword>
<keyword id="KW-1185">Reference proteome</keyword>
<keyword id="KW-0690">Ribosome biogenesis</keyword>
<organism>
    <name type="scientific">Caenorhabditis elegans</name>
    <dbReference type="NCBI Taxonomy" id="6239"/>
    <lineage>
        <taxon>Eukaryota</taxon>
        <taxon>Metazoa</taxon>
        <taxon>Ecdysozoa</taxon>
        <taxon>Nematoda</taxon>
        <taxon>Chromadorea</taxon>
        <taxon>Rhabditida</taxon>
        <taxon>Rhabditina</taxon>
        <taxon>Rhabditomorpha</taxon>
        <taxon>Rhabditoidea</taxon>
        <taxon>Rhabditidae</taxon>
        <taxon>Peloderinae</taxon>
        <taxon>Caenorhabditis</taxon>
    </lineage>
</organism>
<evidence type="ECO:0000250" key="1">
    <source>
        <dbReference type="UniProtKB" id="Q08096"/>
    </source>
</evidence>
<evidence type="ECO:0000250" key="2">
    <source>
        <dbReference type="UniProtKB" id="Q9Y2P8"/>
    </source>
</evidence>
<evidence type="ECO:0000305" key="3"/>
<name>RCL1_CAEEL</name>
<comment type="function">
    <text evidence="1 2">Part of the small subunit (SSU) processome, first precursor of the small eukaryotic ribosomal subunit. During the assembly of the SSU processome in the nucleolus, many ribosome biogenesis factors, an RNA chaperone and ribosomal proteins associate with the nascent pre-rRNA and work in concert to generate RNA folding, modifications, rearrangements and cleavage as well as targeted degradation of pre-ribosomal RNA by the RNA exosome (By similarity). Does not have cyclase activity (By similarity).</text>
</comment>
<comment type="subunit">
    <text evidence="2">Part of the small subunit (SSU) processome, composed of more than 70 proteins and the RNA chaperone small nucleolar RNA (snoRNA) U3.</text>
</comment>
<comment type="subcellular location">
    <subcellularLocation>
        <location evidence="2">Nucleus</location>
        <location evidence="2">Nucleolus</location>
    </subcellularLocation>
</comment>
<comment type="similarity">
    <text evidence="3">Belongs to the RNA 3'-terminal cyclase family. Type 2 subfamily.</text>
</comment>
<reference key="1">
    <citation type="journal article" date="1998" name="Science">
        <title>Genome sequence of the nematode C. elegans: a platform for investigating biology.</title>
        <authorList>
            <consortium name="The C. elegans sequencing consortium"/>
        </authorList>
    </citation>
    <scope>NUCLEOTIDE SEQUENCE [LARGE SCALE GENOMIC DNA]</scope>
    <source>
        <strain>Bristol N2</strain>
    </source>
</reference>
<reference key="2">
    <citation type="journal article" date="1997" name="EMBO J.">
        <title>The human RNA 3'-terminal phosphate cyclase is a member of a new family of proteins conserved in Eucarya, Bacteria and Archaea.</title>
        <authorList>
            <person name="Genschik P."/>
            <person name="Billy E."/>
            <person name="Swianiewicz M."/>
            <person name="Filipowicz W."/>
        </authorList>
    </citation>
    <scope>IDENTIFICATION</scope>
</reference>
<protein>
    <recommendedName>
        <fullName>Probable RNA 3'-terminal phosphate cyclase-like protein</fullName>
    </recommendedName>
</protein>
<proteinExistence type="inferred from homology"/>